<accession>B6I1U0</accession>
<sequence length="291" mass="29714">MTTLAIDIGGTKLAAALIGADGQIRDRRELPTPASQTPEALRDALSALVSPLQAHAQRVAIASTGIIRDGSLLALNPHNLGGLLHFPLVKTLEQLTNLPTIAINDAQAAAWAEYQALEGDVTEMVFITVSTGVGGGVVSGGKLLTGPGGLAGHIGHTLADPHGPVCGCGRTGCVEAIASGRGIAAAAQGELAGADARTIFTRAGQGDEQAQWLIHRSARTLARLIADIKATTDCQCVVVGGSVGLAEGYLALVETYLAQEPAAFHVDLLAAHYRHDAGLLGAALLAQGEKL</sequence>
<gene>
    <name evidence="1" type="primary">nanK</name>
    <name type="ordered locus">ECSE_3501</name>
</gene>
<name>NANK_ECOSE</name>
<feature type="chain" id="PRO_1000139685" description="N-acetylmannosamine kinase">
    <location>
        <begin position="1"/>
        <end position="291"/>
    </location>
</feature>
<feature type="binding site" evidence="1">
    <location>
        <begin position="5"/>
        <end position="12"/>
    </location>
    <ligand>
        <name>ATP</name>
        <dbReference type="ChEBI" id="CHEBI:30616"/>
    </ligand>
</feature>
<feature type="binding site" evidence="1">
    <location>
        <begin position="132"/>
        <end position="139"/>
    </location>
    <ligand>
        <name>ATP</name>
        <dbReference type="ChEBI" id="CHEBI:30616"/>
    </ligand>
</feature>
<feature type="binding site" evidence="1">
    <location>
        <position position="156"/>
    </location>
    <ligand>
        <name>Zn(2+)</name>
        <dbReference type="ChEBI" id="CHEBI:29105"/>
    </ligand>
</feature>
<feature type="binding site" evidence="1">
    <location>
        <position position="166"/>
    </location>
    <ligand>
        <name>Zn(2+)</name>
        <dbReference type="ChEBI" id="CHEBI:29105"/>
    </ligand>
</feature>
<feature type="binding site" evidence="1">
    <location>
        <position position="168"/>
    </location>
    <ligand>
        <name>Zn(2+)</name>
        <dbReference type="ChEBI" id="CHEBI:29105"/>
    </ligand>
</feature>
<feature type="binding site" evidence="1">
    <location>
        <position position="173"/>
    </location>
    <ligand>
        <name>Zn(2+)</name>
        <dbReference type="ChEBI" id="CHEBI:29105"/>
    </ligand>
</feature>
<dbReference type="EC" id="2.7.1.60" evidence="1"/>
<dbReference type="EMBL" id="AP009240">
    <property type="protein sequence ID" value="BAG79025.1"/>
    <property type="molecule type" value="Genomic_DNA"/>
</dbReference>
<dbReference type="RefSeq" id="WP_000209026.1">
    <property type="nucleotide sequence ID" value="NC_011415.1"/>
</dbReference>
<dbReference type="SMR" id="B6I1U0"/>
<dbReference type="KEGG" id="ecy:ECSE_3501"/>
<dbReference type="HOGENOM" id="CLU_036604_0_4_6"/>
<dbReference type="UniPathway" id="UPA00629">
    <property type="reaction ID" value="UER00681"/>
</dbReference>
<dbReference type="Proteomes" id="UP000008199">
    <property type="component" value="Chromosome"/>
</dbReference>
<dbReference type="GO" id="GO:0005524">
    <property type="term" value="F:ATP binding"/>
    <property type="evidence" value="ECO:0007669"/>
    <property type="project" value="UniProtKB-UniRule"/>
</dbReference>
<dbReference type="GO" id="GO:0009384">
    <property type="term" value="F:N-acylmannosamine kinase activity"/>
    <property type="evidence" value="ECO:0007669"/>
    <property type="project" value="UniProtKB-UniRule"/>
</dbReference>
<dbReference type="GO" id="GO:0008270">
    <property type="term" value="F:zinc ion binding"/>
    <property type="evidence" value="ECO:0007669"/>
    <property type="project" value="UniProtKB-UniRule"/>
</dbReference>
<dbReference type="GO" id="GO:0019262">
    <property type="term" value="P:N-acetylneuraminate catabolic process"/>
    <property type="evidence" value="ECO:0007669"/>
    <property type="project" value="UniProtKB-UniRule"/>
</dbReference>
<dbReference type="CDD" id="cd24069">
    <property type="entry name" value="ASKHA_NBD_ROK_EcNanK-like"/>
    <property type="match status" value="1"/>
</dbReference>
<dbReference type="FunFam" id="3.30.420.40:FF:000062">
    <property type="entry name" value="N-acetylmannosamine kinase"/>
    <property type="match status" value="1"/>
</dbReference>
<dbReference type="FunFam" id="3.30.420.40:FF:000063">
    <property type="entry name" value="N-acetylmannosamine kinase"/>
    <property type="match status" value="1"/>
</dbReference>
<dbReference type="Gene3D" id="3.30.420.40">
    <property type="match status" value="2"/>
</dbReference>
<dbReference type="HAMAP" id="MF_01234">
    <property type="entry name" value="ManNAc_kinase"/>
    <property type="match status" value="1"/>
</dbReference>
<dbReference type="InterPro" id="IPR043129">
    <property type="entry name" value="ATPase_NBD"/>
</dbReference>
<dbReference type="InterPro" id="IPR023945">
    <property type="entry name" value="ManNAc_kinase_bac"/>
</dbReference>
<dbReference type="InterPro" id="IPR000600">
    <property type="entry name" value="ROK"/>
</dbReference>
<dbReference type="InterPro" id="IPR049874">
    <property type="entry name" value="ROK_cs"/>
</dbReference>
<dbReference type="NCBIfam" id="NF047821">
    <property type="entry name" value="NactlManKinNanK"/>
    <property type="match status" value="1"/>
</dbReference>
<dbReference type="NCBIfam" id="NF003461">
    <property type="entry name" value="PRK05082.1"/>
    <property type="match status" value="1"/>
</dbReference>
<dbReference type="PANTHER" id="PTHR18964:SF169">
    <property type="entry name" value="N-ACETYLMANNOSAMINE KINASE"/>
    <property type="match status" value="1"/>
</dbReference>
<dbReference type="PANTHER" id="PTHR18964">
    <property type="entry name" value="ROK (REPRESSOR, ORF, KINASE) FAMILY"/>
    <property type="match status" value="1"/>
</dbReference>
<dbReference type="Pfam" id="PF00480">
    <property type="entry name" value="ROK"/>
    <property type="match status" value="1"/>
</dbReference>
<dbReference type="SUPFAM" id="SSF53067">
    <property type="entry name" value="Actin-like ATPase domain"/>
    <property type="match status" value="1"/>
</dbReference>
<dbReference type="PROSITE" id="PS01125">
    <property type="entry name" value="ROK"/>
    <property type="match status" value="1"/>
</dbReference>
<proteinExistence type="inferred from homology"/>
<keyword id="KW-0067">ATP-binding</keyword>
<keyword id="KW-0119">Carbohydrate metabolism</keyword>
<keyword id="KW-0418">Kinase</keyword>
<keyword id="KW-0479">Metal-binding</keyword>
<keyword id="KW-0547">Nucleotide-binding</keyword>
<keyword id="KW-0808">Transferase</keyword>
<keyword id="KW-0862">Zinc</keyword>
<protein>
    <recommendedName>
        <fullName evidence="1">N-acetylmannosamine kinase</fullName>
        <ecNumber evidence="1">2.7.1.60</ecNumber>
    </recommendedName>
    <alternativeName>
        <fullName evidence="1">ManNAc kinase</fullName>
    </alternativeName>
    <alternativeName>
        <fullName evidence="1">N-acetyl-D-mannosamine kinase</fullName>
    </alternativeName>
</protein>
<organism>
    <name type="scientific">Escherichia coli (strain SE11)</name>
    <dbReference type="NCBI Taxonomy" id="409438"/>
    <lineage>
        <taxon>Bacteria</taxon>
        <taxon>Pseudomonadati</taxon>
        <taxon>Pseudomonadota</taxon>
        <taxon>Gammaproteobacteria</taxon>
        <taxon>Enterobacterales</taxon>
        <taxon>Enterobacteriaceae</taxon>
        <taxon>Escherichia</taxon>
    </lineage>
</organism>
<comment type="function">
    <text evidence="1">Catalyzes the phosphorylation of N-acetylmannosamine (ManNAc) to ManNAc-6-P.</text>
</comment>
<comment type="catalytic activity">
    <reaction evidence="1">
        <text>an N-acyl-D-mannosamine + ATP = an N-acyl-D-mannosamine 6-phosphate + ADP + H(+)</text>
        <dbReference type="Rhea" id="RHEA:23832"/>
        <dbReference type="ChEBI" id="CHEBI:15378"/>
        <dbReference type="ChEBI" id="CHEBI:16062"/>
        <dbReference type="ChEBI" id="CHEBI:30616"/>
        <dbReference type="ChEBI" id="CHEBI:57666"/>
        <dbReference type="ChEBI" id="CHEBI:456216"/>
        <dbReference type="EC" id="2.7.1.60"/>
    </reaction>
</comment>
<comment type="pathway">
    <text evidence="1">Amino-sugar metabolism; N-acetylneuraminate degradation; D-fructose 6-phosphate from N-acetylneuraminate: step 2/5.</text>
</comment>
<comment type="subunit">
    <text evidence="1">Homodimer.</text>
</comment>
<comment type="similarity">
    <text evidence="1">Belongs to the ROK (NagC/XylR) family. NanK subfamily.</text>
</comment>
<evidence type="ECO:0000255" key="1">
    <source>
        <dbReference type="HAMAP-Rule" id="MF_01234"/>
    </source>
</evidence>
<reference key="1">
    <citation type="journal article" date="2008" name="DNA Res.">
        <title>Complete genome sequence and comparative analysis of the wild-type commensal Escherichia coli strain SE11 isolated from a healthy adult.</title>
        <authorList>
            <person name="Oshima K."/>
            <person name="Toh H."/>
            <person name="Ogura Y."/>
            <person name="Sasamoto H."/>
            <person name="Morita H."/>
            <person name="Park S.-H."/>
            <person name="Ooka T."/>
            <person name="Iyoda S."/>
            <person name="Taylor T.D."/>
            <person name="Hayashi T."/>
            <person name="Itoh K."/>
            <person name="Hattori M."/>
        </authorList>
    </citation>
    <scope>NUCLEOTIDE SEQUENCE [LARGE SCALE GENOMIC DNA]</scope>
    <source>
        <strain>SE11</strain>
    </source>
</reference>